<accession>P02194</accession>
<organism>
    <name type="scientific">Osphranter rufus</name>
    <name type="common">Red kangaroo</name>
    <name type="synonym">Macropus rufus</name>
    <dbReference type="NCBI Taxonomy" id="9321"/>
    <lineage>
        <taxon>Eukaryota</taxon>
        <taxon>Metazoa</taxon>
        <taxon>Chordata</taxon>
        <taxon>Craniata</taxon>
        <taxon>Vertebrata</taxon>
        <taxon>Euteleostomi</taxon>
        <taxon>Mammalia</taxon>
        <taxon>Metatheria</taxon>
        <taxon>Diprotodontia</taxon>
        <taxon>Macropodidae</taxon>
        <taxon>Osphranter</taxon>
    </lineage>
</organism>
<proteinExistence type="evidence at protein level"/>
<keyword id="KW-0963">Cytoplasm</keyword>
<keyword id="KW-0903">Direct protein sequencing</keyword>
<keyword id="KW-0349">Heme</keyword>
<keyword id="KW-0408">Iron</keyword>
<keyword id="KW-0479">Metal-binding</keyword>
<keyword id="KW-0514">Muscle protein</keyword>
<keyword id="KW-0560">Oxidoreductase</keyword>
<keyword id="KW-0561">Oxygen transport</keyword>
<keyword id="KW-0597">Phosphoprotein</keyword>
<keyword id="KW-0813">Transport</keyword>
<name>MYG_OSPRU</name>
<evidence type="ECO:0000250" key="1">
    <source>
        <dbReference type="UniProtKB" id="P02144"/>
    </source>
</evidence>
<evidence type="ECO:0000250" key="2">
    <source>
        <dbReference type="UniProtKB" id="P02185"/>
    </source>
</evidence>
<evidence type="ECO:0000250" key="3">
    <source>
        <dbReference type="UniProtKB" id="P02189"/>
    </source>
</evidence>
<evidence type="ECO:0000250" key="4">
    <source>
        <dbReference type="UniProtKB" id="P04247"/>
    </source>
</evidence>
<evidence type="ECO:0000250" key="5">
    <source>
        <dbReference type="UniProtKB" id="P68082"/>
    </source>
</evidence>
<evidence type="ECO:0000250" key="6">
    <source>
        <dbReference type="UniProtKB" id="Q9QZ76"/>
    </source>
</evidence>
<evidence type="ECO:0000255" key="7">
    <source>
        <dbReference type="PROSITE-ProRule" id="PRU00238"/>
    </source>
</evidence>
<evidence type="ECO:0000269" key="8">
    <source>
    </source>
</evidence>
<comment type="function">
    <text evidence="1">Monomeric heme protein which primary function is to store oxygen and facilitate its diffusion within muscle tissues. Reversibly binds oxygen through a pentacoordinated heme iron and enables its timely and efficient release as needed during periods of heightened demand. Depending on the oxidative conditions of tissues and cells, and in addition to its ability to bind oxygen, it also has a nitrite reductase activity whereby it regulates the production of bioactive nitric oxide. Under stress conditions, like hypoxia and anoxia, it also protects cells against reactive oxygen species thanks to its pseudoperoxidase activity.</text>
</comment>
<comment type="catalytic activity">
    <reaction evidence="1">
        <text>Fe(III)-heme b-[protein] + nitric oxide + H2O = Fe(II)-heme b-[protein] + nitrite + 2 H(+)</text>
        <dbReference type="Rhea" id="RHEA:77711"/>
        <dbReference type="Rhea" id="RHEA-COMP:18975"/>
        <dbReference type="Rhea" id="RHEA-COMP:18976"/>
        <dbReference type="ChEBI" id="CHEBI:15377"/>
        <dbReference type="ChEBI" id="CHEBI:15378"/>
        <dbReference type="ChEBI" id="CHEBI:16301"/>
        <dbReference type="ChEBI" id="CHEBI:16480"/>
        <dbReference type="ChEBI" id="CHEBI:55376"/>
        <dbReference type="ChEBI" id="CHEBI:60344"/>
    </reaction>
    <physiologicalReaction direction="right-to-left" evidence="1">
        <dbReference type="Rhea" id="RHEA:77713"/>
    </physiologicalReaction>
</comment>
<comment type="catalytic activity">
    <reaction evidence="1">
        <text>H2O2 + AH2 = A + 2 H2O</text>
        <dbReference type="Rhea" id="RHEA:30275"/>
        <dbReference type="ChEBI" id="CHEBI:13193"/>
        <dbReference type="ChEBI" id="CHEBI:15377"/>
        <dbReference type="ChEBI" id="CHEBI:16240"/>
        <dbReference type="ChEBI" id="CHEBI:17499"/>
    </reaction>
</comment>
<comment type="subunit">
    <text evidence="2">Monomeric.</text>
</comment>
<comment type="subcellular location">
    <subcellularLocation>
        <location evidence="1">Cytoplasm</location>
        <location evidence="1">Sarcoplasm</location>
    </subcellularLocation>
</comment>
<comment type="similarity">
    <text evidence="7">Belongs to the globin family.</text>
</comment>
<protein>
    <recommendedName>
        <fullName>Myoglobin</fullName>
    </recommendedName>
    <alternativeName>
        <fullName evidence="1">Nitrite reductase MB</fullName>
        <ecNumber evidence="1">1.7.-.-</ecNumber>
    </alternativeName>
    <alternativeName>
        <fullName evidence="1">Pseudoperoxidase MB</fullName>
        <ecNumber evidence="1">1.11.1.-</ecNumber>
    </alternativeName>
</protein>
<dbReference type="EC" id="1.7.-.-" evidence="1"/>
<dbReference type="EC" id="1.11.1.-" evidence="1"/>
<dbReference type="PIR" id="A02515">
    <property type="entry name" value="MYKGR"/>
</dbReference>
<dbReference type="SMR" id="P02194"/>
<dbReference type="GO" id="GO:0070062">
    <property type="term" value="C:extracellular exosome"/>
    <property type="evidence" value="ECO:0007669"/>
    <property type="project" value="TreeGrafter"/>
</dbReference>
<dbReference type="GO" id="GO:0016528">
    <property type="term" value="C:sarcoplasm"/>
    <property type="evidence" value="ECO:0000250"/>
    <property type="project" value="UniProtKB"/>
</dbReference>
<dbReference type="GO" id="GO:0020037">
    <property type="term" value="F:heme binding"/>
    <property type="evidence" value="ECO:0007669"/>
    <property type="project" value="InterPro"/>
</dbReference>
<dbReference type="GO" id="GO:0046872">
    <property type="term" value="F:metal ion binding"/>
    <property type="evidence" value="ECO:0007669"/>
    <property type="project" value="UniProtKB-KW"/>
</dbReference>
<dbReference type="GO" id="GO:0098809">
    <property type="term" value="F:nitrite reductase activity"/>
    <property type="evidence" value="ECO:0000250"/>
    <property type="project" value="UniProtKB"/>
</dbReference>
<dbReference type="GO" id="GO:0019825">
    <property type="term" value="F:oxygen binding"/>
    <property type="evidence" value="ECO:0007669"/>
    <property type="project" value="InterPro"/>
</dbReference>
<dbReference type="GO" id="GO:0005344">
    <property type="term" value="F:oxygen carrier activity"/>
    <property type="evidence" value="ECO:0000250"/>
    <property type="project" value="UniProtKB"/>
</dbReference>
<dbReference type="GO" id="GO:0004601">
    <property type="term" value="F:peroxidase activity"/>
    <property type="evidence" value="ECO:0000250"/>
    <property type="project" value="UniProtKB"/>
</dbReference>
<dbReference type="GO" id="GO:0019430">
    <property type="term" value="P:removal of superoxide radicals"/>
    <property type="evidence" value="ECO:0000250"/>
    <property type="project" value="UniProtKB"/>
</dbReference>
<dbReference type="Gene3D" id="6.10.140.2100">
    <property type="match status" value="1"/>
</dbReference>
<dbReference type="Gene3D" id="6.10.140.2110">
    <property type="match status" value="1"/>
</dbReference>
<dbReference type="InterPro" id="IPR000971">
    <property type="entry name" value="Globin"/>
</dbReference>
<dbReference type="InterPro" id="IPR009050">
    <property type="entry name" value="Globin-like_sf"/>
</dbReference>
<dbReference type="InterPro" id="IPR002335">
    <property type="entry name" value="Myoglobin"/>
</dbReference>
<dbReference type="PANTHER" id="PTHR47132">
    <property type="entry name" value="MYOGLOBIN"/>
    <property type="match status" value="1"/>
</dbReference>
<dbReference type="PANTHER" id="PTHR47132:SF1">
    <property type="entry name" value="MYOGLOBIN"/>
    <property type="match status" value="1"/>
</dbReference>
<dbReference type="Pfam" id="PF00042">
    <property type="entry name" value="Globin"/>
    <property type="match status" value="1"/>
</dbReference>
<dbReference type="PRINTS" id="PR00613">
    <property type="entry name" value="MYOGLOBIN"/>
</dbReference>
<dbReference type="SUPFAM" id="SSF46458">
    <property type="entry name" value="Globin-like"/>
    <property type="match status" value="1"/>
</dbReference>
<dbReference type="PROSITE" id="PS01033">
    <property type="entry name" value="GLOBIN"/>
    <property type="match status" value="1"/>
</dbReference>
<feature type="initiator methionine" description="Removed" evidence="8">
    <location>
        <position position="1"/>
    </location>
</feature>
<feature type="chain" id="PRO_0000053315" description="Myoglobin">
    <location>
        <begin position="2"/>
        <end position="154"/>
    </location>
</feature>
<feature type="domain" description="Globin" evidence="7">
    <location>
        <begin position="2"/>
        <end position="148"/>
    </location>
</feature>
<feature type="binding site" evidence="5">
    <location>
        <position position="65"/>
    </location>
    <ligand>
        <name>nitrite</name>
        <dbReference type="ChEBI" id="CHEBI:16301"/>
    </ligand>
</feature>
<feature type="binding site" evidence="3 7">
    <location>
        <position position="65"/>
    </location>
    <ligand>
        <name>O2</name>
        <dbReference type="ChEBI" id="CHEBI:15379"/>
    </ligand>
</feature>
<feature type="binding site" description="proximal binding residue" evidence="1">
    <location>
        <position position="94"/>
    </location>
    <ligand>
        <name>heme b</name>
        <dbReference type="ChEBI" id="CHEBI:60344"/>
    </ligand>
    <ligandPart>
        <name>Fe</name>
        <dbReference type="ChEBI" id="CHEBI:18248"/>
    </ligandPart>
</feature>
<feature type="modified residue" description="Phosphoserine" evidence="6">
    <location>
        <position position="4"/>
    </location>
</feature>
<feature type="modified residue" description="Phosphothreonine" evidence="4">
    <location>
        <position position="68"/>
    </location>
</feature>
<gene>
    <name type="primary">MB</name>
</gene>
<sequence>MGLSDGEWQLVLNIWGKVETDEGGHGKDVLIRLFKGHPETLEKFDKFKHLKSEDEMKASEDLKKHGITVLTALGNILKKKGHHEAELKPLAQSHATKHKIPVQFLEFISDAIIQVIQSKHAGNFGADAQAAMKKALELFRHDMAAKYKEFGFQG</sequence>
<reference key="1">
    <citation type="journal article" date="1971" name="Aust. J. Biol. Sci.">
        <title>Studies on marsupial proteins. IV. Amino acid sequence of myoglobin from the red kangaroo, Megaleia rufa.</title>
        <authorList>
            <person name="Air G.M."/>
            <person name="Thompson E.O.P."/>
        </authorList>
    </citation>
    <scope>PROTEIN SEQUENCE OF 2-154</scope>
</reference>